<feature type="chain" id="PRO_0000265665" description="Elongation factor 4">
    <location>
        <begin position="1"/>
        <end position="602"/>
    </location>
</feature>
<feature type="domain" description="tr-type G">
    <location>
        <begin position="8"/>
        <end position="189"/>
    </location>
</feature>
<feature type="binding site" evidence="1">
    <location>
        <begin position="20"/>
        <end position="25"/>
    </location>
    <ligand>
        <name>GTP</name>
        <dbReference type="ChEBI" id="CHEBI:37565"/>
    </ligand>
</feature>
<feature type="binding site" evidence="1">
    <location>
        <begin position="136"/>
        <end position="139"/>
    </location>
    <ligand>
        <name>GTP</name>
        <dbReference type="ChEBI" id="CHEBI:37565"/>
    </ligand>
</feature>
<protein>
    <recommendedName>
        <fullName evidence="1">Elongation factor 4</fullName>
        <shortName evidence="1">EF-4</shortName>
        <ecNumber evidence="1">3.6.5.n1</ecNumber>
    </recommendedName>
    <alternativeName>
        <fullName evidence="1">Ribosomal back-translocase LepA</fullName>
    </alternativeName>
</protein>
<keyword id="KW-0997">Cell inner membrane</keyword>
<keyword id="KW-1003">Cell membrane</keyword>
<keyword id="KW-0342">GTP-binding</keyword>
<keyword id="KW-0378">Hydrolase</keyword>
<keyword id="KW-0472">Membrane</keyword>
<keyword id="KW-0547">Nucleotide-binding</keyword>
<keyword id="KW-0648">Protein biosynthesis</keyword>
<sequence length="602" mass="66841">MKTKAPMKNIRNFSIIAHIDHGKSTLADCLISECNAISNREMKSQVMDTMDIEKERGITIKAQSVRLNYTFKGEDYVLNLIDTPGHVDFSYEVSRSLCSCEGALLVVDATQGVEAQTIANTYIALDNHLEILPVINKIDLPNANVLEVKQDIEDTIGIDCSNANEVSAKAKLGIKDLLEKIITTIPAPSGDPNAPLKALIYDSWFDNYLGALALVRIMDGSINTEQEILVMGTGKKHGVLGLYYPNPLKKIPTKSLECGEIGIVSLGLKSVTDIAVGDTLTDAKNPTSKPIEGFMPAKPFVFAGLYPIETDRFEDLREALLKLQLNDCALNFEPESSVALGFGFRVGFLGLLHMEVIKERLEREFGLNLIATAPTVVYEVHLTDNSIKYVQNPSELPPENHIACIKEPFVRATIITPSEFLGNLMQLLNNKRGIQEKMEYLNQSRVMLTYSLPSNEIVMDFYDKLKSCTKGYASFDYEPIENREAHLVKLDVRVAGDVVDALSIIIDKNKAYEKGRALVETMKELIPRQLFEVAIQASVGNKIIARETIKSVGKNVTAKCYGGDITRKRKLLEKQKEGKKRMKAIGKVELPQEAFLAILKID</sequence>
<dbReference type="EC" id="3.6.5.n1" evidence="1"/>
<dbReference type="EMBL" id="CP000241">
    <property type="protein sequence ID" value="ABF84417.1"/>
    <property type="molecule type" value="Genomic_DNA"/>
</dbReference>
<dbReference type="SMR" id="Q1CUF5"/>
<dbReference type="KEGG" id="hpa:HPAG1_0350"/>
<dbReference type="HOGENOM" id="CLU_009995_3_3_7"/>
<dbReference type="GO" id="GO:0005886">
    <property type="term" value="C:plasma membrane"/>
    <property type="evidence" value="ECO:0007669"/>
    <property type="project" value="UniProtKB-SubCell"/>
</dbReference>
<dbReference type="GO" id="GO:0005525">
    <property type="term" value="F:GTP binding"/>
    <property type="evidence" value="ECO:0007669"/>
    <property type="project" value="UniProtKB-UniRule"/>
</dbReference>
<dbReference type="GO" id="GO:0003924">
    <property type="term" value="F:GTPase activity"/>
    <property type="evidence" value="ECO:0007669"/>
    <property type="project" value="UniProtKB-UniRule"/>
</dbReference>
<dbReference type="GO" id="GO:0043022">
    <property type="term" value="F:ribosome binding"/>
    <property type="evidence" value="ECO:0007669"/>
    <property type="project" value="UniProtKB-UniRule"/>
</dbReference>
<dbReference type="GO" id="GO:0003746">
    <property type="term" value="F:translation elongation factor activity"/>
    <property type="evidence" value="ECO:0007669"/>
    <property type="project" value="UniProtKB-UniRule"/>
</dbReference>
<dbReference type="GO" id="GO:0045727">
    <property type="term" value="P:positive regulation of translation"/>
    <property type="evidence" value="ECO:0007669"/>
    <property type="project" value="UniProtKB-UniRule"/>
</dbReference>
<dbReference type="CDD" id="cd03699">
    <property type="entry name" value="EF4_II"/>
    <property type="match status" value="1"/>
</dbReference>
<dbReference type="CDD" id="cd16260">
    <property type="entry name" value="EF4_III"/>
    <property type="match status" value="1"/>
</dbReference>
<dbReference type="CDD" id="cd01890">
    <property type="entry name" value="LepA"/>
    <property type="match status" value="1"/>
</dbReference>
<dbReference type="CDD" id="cd03709">
    <property type="entry name" value="lepA_C"/>
    <property type="match status" value="1"/>
</dbReference>
<dbReference type="FunFam" id="3.40.50.300:FF:000078">
    <property type="entry name" value="Elongation factor 4"/>
    <property type="match status" value="1"/>
</dbReference>
<dbReference type="FunFam" id="3.30.70.240:FF:000007">
    <property type="entry name" value="Translation factor GUF1, mitochondrial"/>
    <property type="match status" value="1"/>
</dbReference>
<dbReference type="FunFam" id="3.30.70.2570:FF:000001">
    <property type="entry name" value="Translation factor GUF1, mitochondrial"/>
    <property type="match status" value="1"/>
</dbReference>
<dbReference type="FunFam" id="3.30.70.870:FF:000004">
    <property type="entry name" value="Translation factor GUF1, mitochondrial"/>
    <property type="match status" value="1"/>
</dbReference>
<dbReference type="Gene3D" id="3.30.70.240">
    <property type="match status" value="1"/>
</dbReference>
<dbReference type="Gene3D" id="3.30.70.2570">
    <property type="entry name" value="Elongation factor 4, C-terminal domain"/>
    <property type="match status" value="1"/>
</dbReference>
<dbReference type="Gene3D" id="3.30.70.870">
    <property type="entry name" value="Elongation Factor G (Translational Gtpase), domain 3"/>
    <property type="match status" value="1"/>
</dbReference>
<dbReference type="Gene3D" id="3.40.50.300">
    <property type="entry name" value="P-loop containing nucleotide triphosphate hydrolases"/>
    <property type="match status" value="1"/>
</dbReference>
<dbReference type="Gene3D" id="2.40.30.10">
    <property type="entry name" value="Translation factors"/>
    <property type="match status" value="1"/>
</dbReference>
<dbReference type="HAMAP" id="MF_00071">
    <property type="entry name" value="LepA"/>
    <property type="match status" value="1"/>
</dbReference>
<dbReference type="InterPro" id="IPR006297">
    <property type="entry name" value="EF-4"/>
</dbReference>
<dbReference type="InterPro" id="IPR035647">
    <property type="entry name" value="EFG_III/V"/>
</dbReference>
<dbReference type="InterPro" id="IPR000640">
    <property type="entry name" value="EFG_V-like"/>
</dbReference>
<dbReference type="InterPro" id="IPR004161">
    <property type="entry name" value="EFTu-like_2"/>
</dbReference>
<dbReference type="InterPro" id="IPR031157">
    <property type="entry name" value="G_TR_CS"/>
</dbReference>
<dbReference type="InterPro" id="IPR038363">
    <property type="entry name" value="LepA_C_sf"/>
</dbReference>
<dbReference type="InterPro" id="IPR013842">
    <property type="entry name" value="LepA_CTD"/>
</dbReference>
<dbReference type="InterPro" id="IPR035654">
    <property type="entry name" value="LepA_IV"/>
</dbReference>
<dbReference type="InterPro" id="IPR027417">
    <property type="entry name" value="P-loop_NTPase"/>
</dbReference>
<dbReference type="InterPro" id="IPR005225">
    <property type="entry name" value="Small_GTP-bd"/>
</dbReference>
<dbReference type="InterPro" id="IPR000795">
    <property type="entry name" value="T_Tr_GTP-bd_dom"/>
</dbReference>
<dbReference type="InterPro" id="IPR009000">
    <property type="entry name" value="Transl_B-barrel_sf"/>
</dbReference>
<dbReference type="NCBIfam" id="TIGR01393">
    <property type="entry name" value="lepA"/>
    <property type="match status" value="1"/>
</dbReference>
<dbReference type="NCBIfam" id="TIGR00231">
    <property type="entry name" value="small_GTP"/>
    <property type="match status" value="1"/>
</dbReference>
<dbReference type="PANTHER" id="PTHR43512:SF4">
    <property type="entry name" value="TRANSLATION FACTOR GUF1 HOMOLOG, CHLOROPLASTIC"/>
    <property type="match status" value="1"/>
</dbReference>
<dbReference type="PANTHER" id="PTHR43512">
    <property type="entry name" value="TRANSLATION FACTOR GUF1-RELATED"/>
    <property type="match status" value="1"/>
</dbReference>
<dbReference type="Pfam" id="PF00679">
    <property type="entry name" value="EFG_C"/>
    <property type="match status" value="1"/>
</dbReference>
<dbReference type="Pfam" id="PF00009">
    <property type="entry name" value="GTP_EFTU"/>
    <property type="match status" value="1"/>
</dbReference>
<dbReference type="Pfam" id="PF03144">
    <property type="entry name" value="GTP_EFTU_D2"/>
    <property type="match status" value="1"/>
</dbReference>
<dbReference type="Pfam" id="PF06421">
    <property type="entry name" value="LepA_C"/>
    <property type="match status" value="1"/>
</dbReference>
<dbReference type="PRINTS" id="PR00315">
    <property type="entry name" value="ELONGATNFCT"/>
</dbReference>
<dbReference type="SUPFAM" id="SSF54980">
    <property type="entry name" value="EF-G C-terminal domain-like"/>
    <property type="match status" value="2"/>
</dbReference>
<dbReference type="SUPFAM" id="SSF52540">
    <property type="entry name" value="P-loop containing nucleoside triphosphate hydrolases"/>
    <property type="match status" value="1"/>
</dbReference>
<dbReference type="SUPFAM" id="SSF50447">
    <property type="entry name" value="Translation proteins"/>
    <property type="match status" value="1"/>
</dbReference>
<dbReference type="PROSITE" id="PS00301">
    <property type="entry name" value="G_TR_1"/>
    <property type="match status" value="1"/>
</dbReference>
<dbReference type="PROSITE" id="PS51722">
    <property type="entry name" value="G_TR_2"/>
    <property type="match status" value="1"/>
</dbReference>
<reference key="1">
    <citation type="journal article" date="2006" name="Proc. Natl. Acad. Sci. U.S.A.">
        <title>The complete genome sequence of a chronic atrophic gastritis Helicobacter pylori strain: evolution during disease progression.</title>
        <authorList>
            <person name="Oh J.D."/>
            <person name="Kling-Baeckhed H."/>
            <person name="Giannakis M."/>
            <person name="Xu J."/>
            <person name="Fulton R.S."/>
            <person name="Fulton L.A."/>
            <person name="Cordum H.S."/>
            <person name="Wang C."/>
            <person name="Elliott G."/>
            <person name="Edwards J."/>
            <person name="Mardis E.R."/>
            <person name="Engstrand L.G."/>
            <person name="Gordon J.I."/>
        </authorList>
    </citation>
    <scope>NUCLEOTIDE SEQUENCE [LARGE SCALE GENOMIC DNA]</scope>
    <source>
        <strain>HPAG1</strain>
    </source>
</reference>
<evidence type="ECO:0000255" key="1">
    <source>
        <dbReference type="HAMAP-Rule" id="MF_00071"/>
    </source>
</evidence>
<organism>
    <name type="scientific">Helicobacter pylori (strain HPAG1)</name>
    <dbReference type="NCBI Taxonomy" id="357544"/>
    <lineage>
        <taxon>Bacteria</taxon>
        <taxon>Pseudomonadati</taxon>
        <taxon>Campylobacterota</taxon>
        <taxon>Epsilonproteobacteria</taxon>
        <taxon>Campylobacterales</taxon>
        <taxon>Helicobacteraceae</taxon>
        <taxon>Helicobacter</taxon>
    </lineage>
</organism>
<accession>Q1CUF5</accession>
<comment type="function">
    <text evidence="1">Required for accurate and efficient protein synthesis under certain stress conditions. May act as a fidelity factor of the translation reaction, by catalyzing a one-codon backward translocation of tRNAs on improperly translocated ribosomes. Back-translocation proceeds from a post-translocation (POST) complex to a pre-translocation (PRE) complex, thus giving elongation factor G a second chance to translocate the tRNAs correctly. Binds to ribosomes in a GTP-dependent manner.</text>
</comment>
<comment type="catalytic activity">
    <reaction evidence="1">
        <text>GTP + H2O = GDP + phosphate + H(+)</text>
        <dbReference type="Rhea" id="RHEA:19669"/>
        <dbReference type="ChEBI" id="CHEBI:15377"/>
        <dbReference type="ChEBI" id="CHEBI:15378"/>
        <dbReference type="ChEBI" id="CHEBI:37565"/>
        <dbReference type="ChEBI" id="CHEBI:43474"/>
        <dbReference type="ChEBI" id="CHEBI:58189"/>
        <dbReference type="EC" id="3.6.5.n1"/>
    </reaction>
</comment>
<comment type="subcellular location">
    <subcellularLocation>
        <location evidence="1">Cell inner membrane</location>
        <topology evidence="1">Peripheral membrane protein</topology>
        <orientation evidence="1">Cytoplasmic side</orientation>
    </subcellularLocation>
</comment>
<comment type="similarity">
    <text evidence="1">Belongs to the TRAFAC class translation factor GTPase superfamily. Classic translation factor GTPase family. LepA subfamily.</text>
</comment>
<gene>
    <name evidence="1" type="primary">lepA</name>
    <name type="ordered locus">HPAG1_0350</name>
</gene>
<name>LEPA_HELPH</name>
<proteinExistence type="inferred from homology"/>